<reference key="1">
    <citation type="submission" date="2007-07" db="EMBL/GenBank/DDBJ databases">
        <title>Complete genome sequence of Campylobacter jejuni subsp doylei 269.97 isolated from human blood.</title>
        <authorList>
            <person name="Fouts D.E."/>
            <person name="Mongodin E.F."/>
            <person name="Puiu D."/>
            <person name="Sebastian Y."/>
            <person name="Miller W.G."/>
            <person name="Mandrell R.E."/>
            <person name="Lastovica A.J."/>
            <person name="Nelson K.E."/>
        </authorList>
    </citation>
    <scope>NUCLEOTIDE SEQUENCE [LARGE SCALE GENOMIC DNA]</scope>
    <source>
        <strain>ATCC BAA-1458 / RM4099 / 269.97</strain>
    </source>
</reference>
<gene>
    <name evidence="1" type="primary">prfA</name>
    <name type="ordered locus">JJD26997_1966</name>
</gene>
<proteinExistence type="inferred from homology"/>
<sequence length="355" mass="39982">MLASKLDPFLKRFEELNSLLSSSDILNDISKMTTLSKEQKNLEPIVLKTKEYLKTLDNIEENKALLNDPELGELAKEELKTLEELKPKLEEEIKILLLPKDLNDERNIFLEIRAGTGGDEASLFVGDLVKAYARYAENRGYKLEIVSSSEGSVGGFKEIIMLVKGTGAYSRLKYEGGTHRVQRVPQTESQGRVHTSAITVAVMPEVDDIEIEINPNDLKVDVMRSSGHGGQSVNTTDSAVRITHIPTGIVVVNQDGKSQHKNKESAMKVLKARLYEMQENERLAKESEARKSQVGSGDRSERIRTYNFPQNRISDHRINLTLYRLDAIMQDGLFDEIIEPLITHHQAQALQEQNL</sequence>
<comment type="function">
    <text evidence="1">Peptide chain release factor 1 directs the termination of translation in response to the peptide chain termination codons UAG and UAA.</text>
</comment>
<comment type="subcellular location">
    <subcellularLocation>
        <location evidence="1">Cytoplasm</location>
    </subcellularLocation>
</comment>
<comment type="PTM">
    <text evidence="1">Methylated by PrmC. Methylation increases the termination efficiency of RF1.</text>
</comment>
<comment type="similarity">
    <text evidence="1">Belongs to the prokaryotic/mitochondrial release factor family.</text>
</comment>
<feature type="chain" id="PRO_1000004875" description="Peptide chain release factor 1">
    <location>
        <begin position="1"/>
        <end position="355"/>
    </location>
</feature>
<feature type="region of interest" description="Disordered" evidence="2">
    <location>
        <begin position="281"/>
        <end position="302"/>
    </location>
</feature>
<feature type="compositionally biased region" description="Basic and acidic residues" evidence="2">
    <location>
        <begin position="281"/>
        <end position="291"/>
    </location>
</feature>
<feature type="modified residue" description="N5-methylglutamine" evidence="1">
    <location>
        <position position="231"/>
    </location>
</feature>
<dbReference type="EMBL" id="CP000768">
    <property type="protein sequence ID" value="ABS44620.1"/>
    <property type="molecule type" value="Genomic_DNA"/>
</dbReference>
<dbReference type="SMR" id="A7H5W3"/>
<dbReference type="KEGG" id="cjd:JJD26997_1966"/>
<dbReference type="HOGENOM" id="CLU_036856_0_1_7"/>
<dbReference type="Proteomes" id="UP000002302">
    <property type="component" value="Chromosome"/>
</dbReference>
<dbReference type="GO" id="GO:0005737">
    <property type="term" value="C:cytoplasm"/>
    <property type="evidence" value="ECO:0007669"/>
    <property type="project" value="UniProtKB-SubCell"/>
</dbReference>
<dbReference type="GO" id="GO:0016149">
    <property type="term" value="F:translation release factor activity, codon specific"/>
    <property type="evidence" value="ECO:0007669"/>
    <property type="project" value="UniProtKB-UniRule"/>
</dbReference>
<dbReference type="FunFam" id="3.30.160.20:FF:000004">
    <property type="entry name" value="Peptide chain release factor 1"/>
    <property type="match status" value="1"/>
</dbReference>
<dbReference type="FunFam" id="3.30.70.1660:FF:000002">
    <property type="entry name" value="Peptide chain release factor 1"/>
    <property type="match status" value="1"/>
</dbReference>
<dbReference type="FunFam" id="3.30.70.1660:FF:000004">
    <property type="entry name" value="Peptide chain release factor 1"/>
    <property type="match status" value="1"/>
</dbReference>
<dbReference type="Gene3D" id="3.30.160.20">
    <property type="match status" value="1"/>
</dbReference>
<dbReference type="Gene3D" id="3.30.70.1660">
    <property type="match status" value="1"/>
</dbReference>
<dbReference type="Gene3D" id="6.10.140.1950">
    <property type="match status" value="1"/>
</dbReference>
<dbReference type="HAMAP" id="MF_00093">
    <property type="entry name" value="Rel_fac_1"/>
    <property type="match status" value="1"/>
</dbReference>
<dbReference type="InterPro" id="IPR005139">
    <property type="entry name" value="PCRF"/>
</dbReference>
<dbReference type="InterPro" id="IPR000352">
    <property type="entry name" value="Pep_chain_release_fac_I"/>
</dbReference>
<dbReference type="InterPro" id="IPR045853">
    <property type="entry name" value="Pep_chain_release_fac_I_sf"/>
</dbReference>
<dbReference type="InterPro" id="IPR050057">
    <property type="entry name" value="Prokaryotic/Mito_RF"/>
</dbReference>
<dbReference type="InterPro" id="IPR004373">
    <property type="entry name" value="RF-1"/>
</dbReference>
<dbReference type="NCBIfam" id="TIGR00019">
    <property type="entry name" value="prfA"/>
    <property type="match status" value="1"/>
</dbReference>
<dbReference type="NCBIfam" id="NF001859">
    <property type="entry name" value="PRK00591.1"/>
    <property type="match status" value="1"/>
</dbReference>
<dbReference type="PANTHER" id="PTHR43804">
    <property type="entry name" value="LD18447P"/>
    <property type="match status" value="1"/>
</dbReference>
<dbReference type="PANTHER" id="PTHR43804:SF7">
    <property type="entry name" value="LD18447P"/>
    <property type="match status" value="1"/>
</dbReference>
<dbReference type="Pfam" id="PF03462">
    <property type="entry name" value="PCRF"/>
    <property type="match status" value="1"/>
</dbReference>
<dbReference type="Pfam" id="PF00472">
    <property type="entry name" value="RF-1"/>
    <property type="match status" value="1"/>
</dbReference>
<dbReference type="SMART" id="SM00937">
    <property type="entry name" value="PCRF"/>
    <property type="match status" value="1"/>
</dbReference>
<dbReference type="SUPFAM" id="SSF75620">
    <property type="entry name" value="Release factor"/>
    <property type="match status" value="1"/>
</dbReference>
<dbReference type="PROSITE" id="PS00745">
    <property type="entry name" value="RF_PROK_I"/>
    <property type="match status" value="1"/>
</dbReference>
<keyword id="KW-0963">Cytoplasm</keyword>
<keyword id="KW-0488">Methylation</keyword>
<keyword id="KW-0648">Protein biosynthesis</keyword>
<evidence type="ECO:0000255" key="1">
    <source>
        <dbReference type="HAMAP-Rule" id="MF_00093"/>
    </source>
</evidence>
<evidence type="ECO:0000256" key="2">
    <source>
        <dbReference type="SAM" id="MobiDB-lite"/>
    </source>
</evidence>
<accession>A7H5W3</accession>
<protein>
    <recommendedName>
        <fullName evidence="1">Peptide chain release factor 1</fullName>
        <shortName evidence="1">RF-1</shortName>
    </recommendedName>
</protein>
<organism>
    <name type="scientific">Campylobacter jejuni subsp. doylei (strain ATCC BAA-1458 / RM4099 / 269.97)</name>
    <dbReference type="NCBI Taxonomy" id="360109"/>
    <lineage>
        <taxon>Bacteria</taxon>
        <taxon>Pseudomonadati</taxon>
        <taxon>Campylobacterota</taxon>
        <taxon>Epsilonproteobacteria</taxon>
        <taxon>Campylobacterales</taxon>
        <taxon>Campylobacteraceae</taxon>
        <taxon>Campylobacter</taxon>
    </lineage>
</organism>
<name>RF1_CAMJD</name>